<accession>O48100</accession>
<comment type="function">
    <text evidence="2">Component of the ubiquinol-cytochrome c reductase complex (complex III or cytochrome b-c1 complex) that is part of the mitochondrial respiratory chain. The b-c1 complex mediates electron transfer from ubiquinol to cytochrome c. Contributes to the generation of a proton gradient across the mitochondrial membrane that is then used for ATP synthesis.</text>
</comment>
<comment type="cofactor">
    <cofactor evidence="2">
        <name>heme b</name>
        <dbReference type="ChEBI" id="CHEBI:60344"/>
    </cofactor>
    <text evidence="2">Binds 2 heme b groups non-covalently.</text>
</comment>
<comment type="subunit">
    <text evidence="2">The cytochrome bc1 complex contains 3 respiratory subunits (MT-CYB, CYC1 and UQCRFS1), 2 core proteins (UQCRC1 and UQCRC2) and probably 6 low-molecular weight proteins.</text>
</comment>
<comment type="subcellular location">
    <subcellularLocation>
        <location evidence="2">Mitochondrion inner membrane</location>
        <topology evidence="2">Multi-pass membrane protein</topology>
    </subcellularLocation>
</comment>
<comment type="miscellaneous">
    <text evidence="1">Heme 1 (or BL or b562) is low-potential and absorbs at about 562 nm, and heme 2 (or BH or b566) is high-potential and absorbs at about 566 nm.</text>
</comment>
<comment type="similarity">
    <text evidence="3 4">Belongs to the cytochrome b family.</text>
</comment>
<comment type="caution">
    <text evidence="2">The full-length protein contains only eight transmembrane helices, not nine as predicted by bioinformatics tools.</text>
</comment>
<organism>
    <name type="scientific">Loxocemus bicolor</name>
    <name type="common">Mexican burrowing python</name>
    <dbReference type="NCBI Taxonomy" id="39078"/>
    <lineage>
        <taxon>Eukaryota</taxon>
        <taxon>Metazoa</taxon>
        <taxon>Chordata</taxon>
        <taxon>Craniata</taxon>
        <taxon>Vertebrata</taxon>
        <taxon>Euteleostomi</taxon>
        <taxon>Lepidosauria</taxon>
        <taxon>Squamata</taxon>
        <taxon>Bifurcata</taxon>
        <taxon>Unidentata</taxon>
        <taxon>Episquamata</taxon>
        <taxon>Toxicofera</taxon>
        <taxon>Serpentes</taxon>
        <taxon>Henophidia</taxon>
        <taxon>Loxocemidae</taxon>
        <taxon>Loxocemus</taxon>
    </lineage>
</organism>
<name>CYB_LOXBI</name>
<geneLocation type="mitochondrion"/>
<protein>
    <recommendedName>
        <fullName>Cytochrome b</fullName>
    </recommendedName>
    <alternativeName>
        <fullName>Complex III subunit 3</fullName>
    </alternativeName>
    <alternativeName>
        <fullName>Complex III subunit III</fullName>
    </alternativeName>
    <alternativeName>
        <fullName>Cytochrome b-c1 complex subunit 3</fullName>
    </alternativeName>
    <alternativeName>
        <fullName>Ubiquinol-cytochrome-c reductase complex cytochrome b subunit</fullName>
    </alternativeName>
</protein>
<keyword id="KW-0249">Electron transport</keyword>
<keyword id="KW-0349">Heme</keyword>
<keyword id="KW-0408">Iron</keyword>
<keyword id="KW-0472">Membrane</keyword>
<keyword id="KW-0479">Metal-binding</keyword>
<keyword id="KW-0496">Mitochondrion</keyword>
<keyword id="KW-0999">Mitochondrion inner membrane</keyword>
<keyword id="KW-0679">Respiratory chain</keyword>
<keyword id="KW-0812">Transmembrane</keyword>
<keyword id="KW-1133">Transmembrane helix</keyword>
<keyword id="KW-0813">Transport</keyword>
<keyword id="KW-0830">Ubiquinone</keyword>
<feature type="chain" id="PRO_0000061137" description="Cytochrome b">
    <location>
        <begin position="1"/>
        <end position="371"/>
    </location>
</feature>
<feature type="transmembrane region" description="Helical" evidence="2">
    <location>
        <begin position="25"/>
        <end position="45"/>
    </location>
</feature>
<feature type="transmembrane region" description="Helical" evidence="2">
    <location>
        <begin position="69"/>
        <end position="90"/>
    </location>
</feature>
<feature type="transmembrane region" description="Helical" evidence="2">
    <location>
        <begin position="105"/>
        <end position="125"/>
    </location>
</feature>
<feature type="transmembrane region" description="Helical" evidence="2">
    <location>
        <begin position="170"/>
        <end position="190"/>
    </location>
</feature>
<feature type="transmembrane region" description="Helical" evidence="2">
    <location>
        <begin position="218"/>
        <end position="238"/>
    </location>
</feature>
<feature type="transmembrane region" description="Helical" evidence="2">
    <location>
        <begin position="280"/>
        <end position="300"/>
    </location>
</feature>
<feature type="transmembrane region" description="Helical" evidence="2">
    <location>
        <begin position="312"/>
        <end position="332"/>
    </location>
</feature>
<feature type="transmembrane region" description="Helical" evidence="2">
    <location>
        <begin position="339"/>
        <end position="359"/>
    </location>
</feature>
<feature type="binding site" description="axial binding residue" evidence="2">
    <location>
        <position position="75"/>
    </location>
    <ligand>
        <name>heme b</name>
        <dbReference type="ChEBI" id="CHEBI:60344"/>
        <label>b562</label>
    </ligand>
    <ligandPart>
        <name>Fe</name>
        <dbReference type="ChEBI" id="CHEBI:18248"/>
    </ligandPart>
</feature>
<feature type="binding site" description="axial binding residue" evidence="2">
    <location>
        <position position="89"/>
    </location>
    <ligand>
        <name>heme b</name>
        <dbReference type="ChEBI" id="CHEBI:60344"/>
        <label>b566</label>
    </ligand>
    <ligandPart>
        <name>Fe</name>
        <dbReference type="ChEBI" id="CHEBI:18248"/>
    </ligandPart>
</feature>
<feature type="binding site" description="axial binding residue" evidence="2">
    <location>
        <position position="174"/>
    </location>
    <ligand>
        <name>heme b</name>
        <dbReference type="ChEBI" id="CHEBI:60344"/>
        <label>b562</label>
    </ligand>
    <ligandPart>
        <name>Fe</name>
        <dbReference type="ChEBI" id="CHEBI:18248"/>
    </ligandPart>
</feature>
<feature type="binding site" description="axial binding residue" evidence="2">
    <location>
        <position position="188"/>
    </location>
    <ligand>
        <name>heme b</name>
        <dbReference type="ChEBI" id="CHEBI:60344"/>
        <label>b566</label>
    </ligand>
    <ligandPart>
        <name>Fe</name>
        <dbReference type="ChEBI" id="CHEBI:18248"/>
    </ligandPart>
</feature>
<feature type="binding site" evidence="2">
    <location>
        <position position="193"/>
    </location>
    <ligand>
        <name>a ubiquinone</name>
        <dbReference type="ChEBI" id="CHEBI:16389"/>
    </ligand>
</feature>
<sequence length="371" mass="41970">MPHHYILKLFGLLPVATNISTWWNFGSMLLTCLTLQVATGFFLAVHYTANINLAFSSIVHMIRDVPYGWMMQNLHAIGASMFFICIYIHIARGLYYGSYMNKKTWMSGITLLITLMATAFFGYILPWGQMSFWAATVITNLLTAVPYLGTSLTTWLWGGFAINDPTLTRFFALHFILPFLIISLSSLHIILLHEEGSSNPLGTNPDFDKIPFHPYHSYKDFLMLTLMIMMLLIIMPFLPNIFNDPDNFSKANPLXXXXXXXXXXXXXXXXXILRSIPNKLGGVLALAASILVLFLMPLLHTSKLRSMTFRPLSQILFWTLVTNVLILTWVGSQPVEHPFIIIGQLASLTYFLIILVLFPLAALLENKLLKL</sequence>
<dbReference type="EMBL" id="U69845">
    <property type="protein sequence ID" value="AAC01870.1"/>
    <property type="molecule type" value="Genomic_DNA"/>
</dbReference>
<dbReference type="GO" id="GO:0005743">
    <property type="term" value="C:mitochondrial inner membrane"/>
    <property type="evidence" value="ECO:0007669"/>
    <property type="project" value="UniProtKB-SubCell"/>
</dbReference>
<dbReference type="GO" id="GO:0045275">
    <property type="term" value="C:respiratory chain complex III"/>
    <property type="evidence" value="ECO:0007669"/>
    <property type="project" value="InterPro"/>
</dbReference>
<dbReference type="GO" id="GO:0046872">
    <property type="term" value="F:metal ion binding"/>
    <property type="evidence" value="ECO:0007669"/>
    <property type="project" value="UniProtKB-KW"/>
</dbReference>
<dbReference type="GO" id="GO:0008121">
    <property type="term" value="F:ubiquinol-cytochrome-c reductase activity"/>
    <property type="evidence" value="ECO:0007669"/>
    <property type="project" value="InterPro"/>
</dbReference>
<dbReference type="GO" id="GO:0006122">
    <property type="term" value="P:mitochondrial electron transport, ubiquinol to cytochrome c"/>
    <property type="evidence" value="ECO:0007669"/>
    <property type="project" value="TreeGrafter"/>
</dbReference>
<dbReference type="CDD" id="cd00284">
    <property type="entry name" value="Cytochrome_b_N"/>
    <property type="match status" value="1"/>
</dbReference>
<dbReference type="Gene3D" id="1.20.810.10">
    <property type="entry name" value="Cytochrome Bc1 Complex, Chain C"/>
    <property type="match status" value="1"/>
</dbReference>
<dbReference type="InterPro" id="IPR005798">
    <property type="entry name" value="Cyt_b/b6_C"/>
</dbReference>
<dbReference type="InterPro" id="IPR036150">
    <property type="entry name" value="Cyt_b/b6_C_sf"/>
</dbReference>
<dbReference type="InterPro" id="IPR005797">
    <property type="entry name" value="Cyt_b/b6_N"/>
</dbReference>
<dbReference type="InterPro" id="IPR027387">
    <property type="entry name" value="Cytb/b6-like_sf"/>
</dbReference>
<dbReference type="InterPro" id="IPR030689">
    <property type="entry name" value="Cytochrome_b"/>
</dbReference>
<dbReference type="InterPro" id="IPR048259">
    <property type="entry name" value="Cytochrome_b_N_euk/bac"/>
</dbReference>
<dbReference type="InterPro" id="IPR016174">
    <property type="entry name" value="Di-haem_cyt_TM"/>
</dbReference>
<dbReference type="PANTHER" id="PTHR19271">
    <property type="entry name" value="CYTOCHROME B"/>
    <property type="match status" value="1"/>
</dbReference>
<dbReference type="PANTHER" id="PTHR19271:SF16">
    <property type="entry name" value="CYTOCHROME B"/>
    <property type="match status" value="1"/>
</dbReference>
<dbReference type="Pfam" id="PF00032">
    <property type="entry name" value="Cytochrom_B_C"/>
    <property type="match status" value="1"/>
</dbReference>
<dbReference type="Pfam" id="PF00033">
    <property type="entry name" value="Cytochrome_B"/>
    <property type="match status" value="1"/>
</dbReference>
<dbReference type="PIRSF" id="PIRSF038885">
    <property type="entry name" value="COB"/>
    <property type="match status" value="1"/>
</dbReference>
<dbReference type="SUPFAM" id="SSF81648">
    <property type="entry name" value="a domain/subunit of cytochrome bc1 complex (Ubiquinol-cytochrome c reductase)"/>
    <property type="match status" value="1"/>
</dbReference>
<dbReference type="SUPFAM" id="SSF81342">
    <property type="entry name" value="Transmembrane di-heme cytochromes"/>
    <property type="match status" value="1"/>
</dbReference>
<dbReference type="PROSITE" id="PS51003">
    <property type="entry name" value="CYTB_CTER"/>
    <property type="match status" value="1"/>
</dbReference>
<dbReference type="PROSITE" id="PS51002">
    <property type="entry name" value="CYTB_NTER"/>
    <property type="match status" value="1"/>
</dbReference>
<evidence type="ECO:0000250" key="1"/>
<evidence type="ECO:0000250" key="2">
    <source>
        <dbReference type="UniProtKB" id="P00157"/>
    </source>
</evidence>
<evidence type="ECO:0000255" key="3">
    <source>
        <dbReference type="PROSITE-ProRule" id="PRU00967"/>
    </source>
</evidence>
<evidence type="ECO:0000255" key="4">
    <source>
        <dbReference type="PROSITE-ProRule" id="PRU00968"/>
    </source>
</evidence>
<reference key="1">
    <citation type="thesis" date="1997" institute="Queen's University / Kingston" country="Canada">
        <title>Hic Sunt Serpentes -- molecular phylogenetics and the Boidae (Serpentes: Booidea).</title>
        <authorList>
            <person name="Campbell B.N."/>
        </authorList>
    </citation>
    <scope>NUCLEOTIDE SEQUENCE [GENOMIC DNA]</scope>
</reference>
<gene>
    <name type="primary">MT-CYB</name>
    <name type="synonym">COB</name>
    <name type="synonym">CYTB</name>
    <name type="synonym">MTCYB</name>
</gene>
<proteinExistence type="inferred from homology"/>